<evidence type="ECO:0000250" key="1">
    <source>
        <dbReference type="UniProtKB" id="Q9BZ29"/>
    </source>
</evidence>
<evidence type="ECO:0000255" key="2">
    <source>
        <dbReference type="PROSITE-ProRule" id="PRU00145"/>
    </source>
</evidence>
<evidence type="ECO:0000255" key="3">
    <source>
        <dbReference type="PROSITE-ProRule" id="PRU00983"/>
    </source>
</evidence>
<evidence type="ECO:0000255" key="4">
    <source>
        <dbReference type="PROSITE-ProRule" id="PRU00984"/>
    </source>
</evidence>
<evidence type="ECO:0000256" key="5">
    <source>
        <dbReference type="SAM" id="MobiDB-lite"/>
    </source>
</evidence>
<evidence type="ECO:0000269" key="6">
    <source>
    </source>
</evidence>
<evidence type="ECO:0000269" key="7">
    <source>
    </source>
</evidence>
<evidence type="ECO:0000269" key="8">
    <source>
    </source>
</evidence>
<evidence type="ECO:0000303" key="9">
    <source>
    </source>
</evidence>
<evidence type="ECO:0000303" key="10">
    <source>
    </source>
</evidence>
<evidence type="ECO:0000303" key="11">
    <source>
    </source>
</evidence>
<evidence type="ECO:0000305" key="12"/>
<evidence type="ECO:0000312" key="13">
    <source>
        <dbReference type="MGI" id="MGI:106321"/>
    </source>
</evidence>
<evidence type="ECO:0007744" key="14">
    <source>
    </source>
</evidence>
<dbReference type="EMBL" id="AK122431">
    <property type="protein sequence ID" value="BAC65713.1"/>
    <property type="status" value="ALT_INIT"/>
    <property type="molecule type" value="mRNA"/>
</dbReference>
<dbReference type="EMBL" id="AK045750">
    <property type="protein sequence ID" value="BAC32480.1"/>
    <property type="molecule type" value="mRNA"/>
</dbReference>
<dbReference type="EMBL" id="BC009134">
    <property type="protein sequence ID" value="AAH09134.1"/>
    <property type="status" value="ALT_INIT"/>
    <property type="molecule type" value="mRNA"/>
</dbReference>
<dbReference type="EMBL" id="BC046250">
    <property type="protein sequence ID" value="AAH46250.1"/>
    <property type="molecule type" value="mRNA"/>
</dbReference>
<dbReference type="CCDS" id="CCDS88728.1">
    <molecule id="Q8BIK4-1"/>
</dbReference>
<dbReference type="SMR" id="Q8BIK4"/>
<dbReference type="FunCoup" id="Q8BIK4">
    <property type="interactions" value="969"/>
</dbReference>
<dbReference type="STRING" id="10090.ENSMUSP00000047881"/>
<dbReference type="iPTMnet" id="Q8BIK4"/>
<dbReference type="PhosphoSitePlus" id="Q8BIK4"/>
<dbReference type="SwissPalm" id="Q8BIK4"/>
<dbReference type="jPOST" id="Q8BIK4"/>
<dbReference type="PaxDb" id="10090-ENSMUSP00000047881"/>
<dbReference type="PeptideAtlas" id="Q8BIK4"/>
<dbReference type="ProteomicsDB" id="279465">
    <molecule id="Q8BIK4-1"/>
</dbReference>
<dbReference type="ProteomicsDB" id="279466">
    <molecule id="Q8BIK4-2"/>
</dbReference>
<dbReference type="ProteomicsDB" id="279467">
    <molecule id="Q8BIK4-3"/>
</dbReference>
<dbReference type="Pumba" id="Q8BIK4"/>
<dbReference type="UCSC" id="uc007val.1">
    <molecule id="Q8BIK4-3"/>
    <property type="organism name" value="mouse"/>
</dbReference>
<dbReference type="UCSC" id="uc011zqg.1">
    <molecule id="Q8BIK4-1"/>
    <property type="organism name" value="mouse"/>
</dbReference>
<dbReference type="AGR" id="MGI:106321"/>
<dbReference type="MGI" id="MGI:106321">
    <property type="gene designation" value="Dock9"/>
</dbReference>
<dbReference type="eggNOG" id="KOG1997">
    <property type="taxonomic scope" value="Eukaryota"/>
</dbReference>
<dbReference type="InParanoid" id="Q8BIK4"/>
<dbReference type="OrthoDB" id="47328at2759"/>
<dbReference type="PhylomeDB" id="Q8BIK4"/>
<dbReference type="Reactome" id="R-MMU-9013148">
    <property type="pathway name" value="CDC42 GTPase cycle"/>
</dbReference>
<dbReference type="Reactome" id="R-MMU-9013149">
    <property type="pathway name" value="RAC1 GTPase cycle"/>
</dbReference>
<dbReference type="Reactome" id="R-MMU-983231">
    <property type="pathway name" value="Factors involved in megakaryocyte development and platelet production"/>
</dbReference>
<dbReference type="CD-CODE" id="CE726F99">
    <property type="entry name" value="Postsynaptic density"/>
</dbReference>
<dbReference type="ChiTaRS" id="Dock9">
    <property type="organism name" value="mouse"/>
</dbReference>
<dbReference type="PRO" id="PR:Q8BIK4"/>
<dbReference type="Proteomes" id="UP000000589">
    <property type="component" value="Unplaced"/>
</dbReference>
<dbReference type="RNAct" id="Q8BIK4">
    <property type="molecule type" value="protein"/>
</dbReference>
<dbReference type="GO" id="GO:0012505">
    <property type="term" value="C:endomembrane system"/>
    <property type="evidence" value="ECO:0007669"/>
    <property type="project" value="UniProtKB-SubCell"/>
</dbReference>
<dbReference type="GO" id="GO:0016020">
    <property type="term" value="C:membrane"/>
    <property type="evidence" value="ECO:0007669"/>
    <property type="project" value="UniProtKB-KW"/>
</dbReference>
<dbReference type="GO" id="GO:0005085">
    <property type="term" value="F:guanyl-nucleotide exchange factor activity"/>
    <property type="evidence" value="ECO:0000314"/>
    <property type="project" value="UniProtKB"/>
</dbReference>
<dbReference type="GO" id="GO:0031267">
    <property type="term" value="F:small GTPase binding"/>
    <property type="evidence" value="ECO:0000353"/>
    <property type="project" value="MGI"/>
</dbReference>
<dbReference type="GO" id="GO:0043547">
    <property type="term" value="P:positive regulation of GTPase activity"/>
    <property type="evidence" value="ECO:0000314"/>
    <property type="project" value="UniProtKB"/>
</dbReference>
<dbReference type="GO" id="GO:0007264">
    <property type="term" value="P:small GTPase-mediated signal transduction"/>
    <property type="evidence" value="ECO:0007669"/>
    <property type="project" value="InterPro"/>
</dbReference>
<dbReference type="CDD" id="cd08697">
    <property type="entry name" value="C2_Dock-D"/>
    <property type="match status" value="1"/>
</dbReference>
<dbReference type="CDD" id="cd11698">
    <property type="entry name" value="DHR2_DOCK9"/>
    <property type="match status" value="1"/>
</dbReference>
<dbReference type="CDD" id="cd13267">
    <property type="entry name" value="PH_DOCK-D"/>
    <property type="match status" value="1"/>
</dbReference>
<dbReference type="FunFam" id="1.20.58.740:FF:000001">
    <property type="entry name" value="dedicator of cytokinesis protein 9 isoform X1"/>
    <property type="match status" value="1"/>
</dbReference>
<dbReference type="FunFam" id="2.30.29.30:FF:000016">
    <property type="entry name" value="dedicator of cytokinesis protein 9 isoform X1"/>
    <property type="match status" value="1"/>
</dbReference>
<dbReference type="FunFam" id="2.60.40.150:FF:000015">
    <property type="entry name" value="dedicator of cytokinesis protein 9 isoform X1"/>
    <property type="match status" value="1"/>
</dbReference>
<dbReference type="FunFam" id="1.25.40.410:FF:000001">
    <property type="entry name" value="dedicator of cytokinesis protein 9 isoform X2"/>
    <property type="match status" value="1"/>
</dbReference>
<dbReference type="Gene3D" id="1.20.58.740">
    <property type="match status" value="1"/>
</dbReference>
<dbReference type="Gene3D" id="1.25.40.410">
    <property type="match status" value="1"/>
</dbReference>
<dbReference type="Gene3D" id="2.60.40.150">
    <property type="entry name" value="C2 domain"/>
    <property type="match status" value="1"/>
</dbReference>
<dbReference type="Gene3D" id="2.30.29.30">
    <property type="entry name" value="Pleckstrin-homology domain (PH domain)/Phosphotyrosine-binding domain (PTB)"/>
    <property type="match status" value="1"/>
</dbReference>
<dbReference type="InterPro" id="IPR016024">
    <property type="entry name" value="ARM-type_fold"/>
</dbReference>
<dbReference type="InterPro" id="IPR037809">
    <property type="entry name" value="C2_Dock-D"/>
</dbReference>
<dbReference type="InterPro" id="IPR027007">
    <property type="entry name" value="C2_DOCK-type_domain"/>
</dbReference>
<dbReference type="InterPro" id="IPR035892">
    <property type="entry name" value="C2_domain_sf"/>
</dbReference>
<dbReference type="InterPro" id="IPR026791">
    <property type="entry name" value="DOCK"/>
</dbReference>
<dbReference type="InterPro" id="IPR021816">
    <property type="entry name" value="DOCK_C/D_N"/>
</dbReference>
<dbReference type="InterPro" id="IPR043161">
    <property type="entry name" value="DOCK_C_lobe_A"/>
</dbReference>
<dbReference type="InterPro" id="IPR043162">
    <property type="entry name" value="DOCK_C_lobe_C"/>
</dbReference>
<dbReference type="InterPro" id="IPR027357">
    <property type="entry name" value="DOCKER_dom"/>
</dbReference>
<dbReference type="InterPro" id="IPR046769">
    <property type="entry name" value="DOCKER_Lobe_A"/>
</dbReference>
<dbReference type="InterPro" id="IPR046770">
    <property type="entry name" value="DOCKER_Lobe_B"/>
</dbReference>
<dbReference type="InterPro" id="IPR046773">
    <property type="entry name" value="DOCKER_Lobe_C"/>
</dbReference>
<dbReference type="InterPro" id="IPR011993">
    <property type="entry name" value="PH-like_dom_sf"/>
</dbReference>
<dbReference type="InterPro" id="IPR001849">
    <property type="entry name" value="PH_domain"/>
</dbReference>
<dbReference type="PANTHER" id="PTHR23317">
    <property type="entry name" value="DEDICATOR OF CYTOKINESIS DOCK"/>
    <property type="match status" value="1"/>
</dbReference>
<dbReference type="PANTHER" id="PTHR23317:SF77">
    <property type="entry name" value="DEDICATOR OF CYTOKINESIS PROTEIN 9"/>
    <property type="match status" value="1"/>
</dbReference>
<dbReference type="Pfam" id="PF06920">
    <property type="entry name" value="DHR-2_Lobe_A"/>
    <property type="match status" value="1"/>
</dbReference>
<dbReference type="Pfam" id="PF20422">
    <property type="entry name" value="DHR-2_Lobe_B"/>
    <property type="match status" value="1"/>
</dbReference>
<dbReference type="Pfam" id="PF20421">
    <property type="entry name" value="DHR-2_Lobe_C"/>
    <property type="match status" value="1"/>
</dbReference>
<dbReference type="Pfam" id="PF14429">
    <property type="entry name" value="DOCK-C2"/>
    <property type="match status" value="1"/>
</dbReference>
<dbReference type="Pfam" id="PF11878">
    <property type="entry name" value="DOCK_C-D_N"/>
    <property type="match status" value="1"/>
</dbReference>
<dbReference type="Pfam" id="PF00169">
    <property type="entry name" value="PH"/>
    <property type="match status" value="1"/>
</dbReference>
<dbReference type="SMART" id="SM00233">
    <property type="entry name" value="PH"/>
    <property type="match status" value="1"/>
</dbReference>
<dbReference type="SUPFAM" id="SSF48371">
    <property type="entry name" value="ARM repeat"/>
    <property type="match status" value="1"/>
</dbReference>
<dbReference type="SUPFAM" id="SSF50729">
    <property type="entry name" value="PH domain-like"/>
    <property type="match status" value="1"/>
</dbReference>
<dbReference type="PROSITE" id="PS51650">
    <property type="entry name" value="C2_DOCK"/>
    <property type="match status" value="1"/>
</dbReference>
<dbReference type="PROSITE" id="PS51651">
    <property type="entry name" value="DOCKER"/>
    <property type="match status" value="1"/>
</dbReference>
<dbReference type="PROSITE" id="PS50003">
    <property type="entry name" value="PH_DOMAIN"/>
    <property type="match status" value="1"/>
</dbReference>
<comment type="function">
    <text evidence="1 8">Guanine nucleotide-exchange factor (GEF) that activates CDC42 by exchanging bound GDP for free GTP (PubMed:25851601). Overexpression induces filopodia formation (By similarity).</text>
</comment>
<comment type="subunit">
    <text evidence="1">Homodimer. Interacts preferentially with nucleotide-depleted CDC42 (By similarity).</text>
</comment>
<comment type="subcellular location">
    <subcellularLocation>
        <location evidence="12">Endomembrane system</location>
    </subcellularLocation>
    <text evidence="12">Associated with membranes.</text>
</comment>
<comment type="alternative products">
    <event type="alternative splicing"/>
    <isoform>
        <id>Q8BIK4-1</id>
        <name>1</name>
        <sequence type="displayed"/>
    </isoform>
    <isoform>
        <id>Q8BIK4-2</id>
        <name>2</name>
        <sequence type="described" ref="VSP_007712 VSP_007713 VSP_007714 VSP_007715"/>
    </isoform>
    <isoform>
        <id>Q8BIK4-3</id>
        <name>3</name>
        <sequence type="described" ref="VSP_007711"/>
    </isoform>
</comment>
<comment type="tissue specificity">
    <text evidence="6 7 8">Expressed in lung (PubMed:22494997, PubMed:25729399). Also detected in Peyers patches, thymus, brain and lymph nodes (PubMed:22494997). Expressed in Purkinje cells (PubMed:25851601).</text>
</comment>
<comment type="domain">
    <text evidence="8">The DOCKER domain is necessary and sufficient for the GEF activity.</text>
</comment>
<comment type="miscellaneous">
    <text evidence="12">'Zizim' means 'spike' in Hebrew.</text>
</comment>
<comment type="similarity">
    <text evidence="3">Belongs to the DOCK family.</text>
</comment>
<comment type="sequence caution" evidence="12">
    <conflict type="erroneous initiation">
        <sequence resource="EMBL-CDS" id="AAH09134"/>
    </conflict>
    <text>Truncated N-terminus.</text>
</comment>
<comment type="sequence caution" evidence="12">
    <conflict type="erroneous initiation">
        <sequence resource="EMBL-CDS" id="BAC65713"/>
    </conflict>
    <text>Extended N-terminus.</text>
</comment>
<protein>
    <recommendedName>
        <fullName>Dedicator of cytokinesis protein 9</fullName>
    </recommendedName>
    <alternativeName>
        <fullName>Cdc42 guanine nucleotide exchange factor zizimin-1</fullName>
        <shortName evidence="11">Zizimin-1</shortName>
    </alternativeName>
</protein>
<accession>Q8BIK4</accession>
<accession>Q921Y6</accession>
<keyword id="KW-0025">Alternative splicing</keyword>
<keyword id="KW-0344">Guanine-nucleotide releasing factor</keyword>
<keyword id="KW-0472">Membrane</keyword>
<keyword id="KW-0597">Phosphoprotein</keyword>
<keyword id="KW-1185">Reference proteome</keyword>
<sequence>MGCTTSVILFKGIRTVFERNCAYMCKQPGESNALEYTAYNWSKEDSELSIAFCLAKPKLIEPLDYENVIVQKKTQILNDCLREMLLFPYDDFQTAILRRQGRYLRSTVPANAEEEAQSLFVTECIKTYNSDWHLVTYKYEDYSGEFRQLPNKVPKLDKLPVHVYEVDEEADKDEDAASLGSQKGGITKHGWLYKGNMNSAISVTMRSFKRRFFHLIQLGDGSYNLNFYKDEKISKEPKGSIFLDSCMGVIQNNRVRRFAFELKMQDKSSYLLAADSEAEMEEWVTVLNKILQLNFEAAMQEKRNGDPHEDDEQSKLEGSGSGLDSYLPELAKSTREAEIKLKSESRVKLFYLDPDTQKLDFSSAEPEVKPFEEKFGKRILVKCNDLSFNLQCCVAENEEGPTTNVEPFFVTLSLFDIKYNRKISADFHVDLNHFSVRQMLAPTSPALMNGGQSPPAFQDALHTAMQYPKQGIFSVTCPHPDIFLVARIEKVLQGSITHCAEPYMRSSDSSKVAQKVLKNAKQACQRLGQYRMPFAWAARTLFKDTSGNLDKNARFSAIYRQDSNKLSNDDMLKLLADFRKPEKMAKLPVILGNLDITIDSVSCDFPNYLNSSYIPMRQFETCSKSPITFEVEEFVPCIPKHTQPYTVYSNHLYVYPKYLKYDSQKSFAKARNIAICIEFKDSDEEDSQPLKCIYGRPGGPVFTRSALAAVLHHQQNPEFYDEIKIELPAQLHERHHLLFTFFHVSCDNSTKGSTKKKDAVETQVGFSWLPLLKDGRVLTSEQHIPVSANLPSGYLGYQELGMGRHYGPEVKWVEGGKPLLKISTHLVSTVYTQDQHLHNFFQYCQKTESGAQASGSELVKYLKSLHAMEGHVMIAFLPTILNQLFRVLTRATQEEVAVNVTRVIIHVVAQCHEEGLESHLRSYVKFAYKAEPYVASEYKTVHEELTKSMTTILKPSADFLTSNKLLKYSWFFFDVLIKSMAQHLIENNKVKLLRNQRFPASYHHAVETVVNMLMPHITQKFRDNPEASKNANHSLAVFIKRCFTFMDRGFVFKQINNYISCFAPGDPKTLFEYKFEFLRVVCNHEHYIPLNLPMPFGKGRIQRYQDLQLDYSLTDEFCRNHFLVGLLLREVGTALQEFREVRVIAISMLKNLLIKHSFDDRYNSRSHQARIATLYLPLFGLLIENVQRINVRDVSPFPVNPGSIVKDEALAVPAGNPLMTPQKGNTLDHSLHKDLLGAISGIASPYTASTPNINSVRNADSRGSLISTDSGNSLPDRNPEKSNSLDKQQQSGMLGNSVVRCDKLDQSEIKSLLMCFLYVLKSMSDDALFTYWNKASTAELMDFFTISEVCLHQFQYMGKRYIARTGMMHARLQQLGSLDNSVTFNHSYGHSEADVVHQSLLEANIATEVCLTALDTLSLFTLAFKNQLLADHGHNPLMKKVFDVYLCFLQKHQSEMALKNVFTALRSLIYKFPSAFYEGRADMCASLCYEVLKCCNSKLSSIRTEASQLLYFLMRNNFDYTGKKSFVRTHLQVIISVSQLIADVVGIGGTRFQQSLSIINNCANSDRIIKHTSFSSDVKDLTKRIRTVLMATAQMKEHENDPEMLVDLQYSLAKSYASTPELRKTWLDSMARIHVKNGDLSEAAMCYVHVTALVAEYLTRKGMFRQGCTAFRVITPNIDEEASMMEDVGMQDVHFNEDVLMELLEQCADGLWKAERYELIADIYKLIIPIYEKRRDFERLAHLYDTLHRAYSKVTEVMHSGRRLLGTYFRVAFFGQAAQYQFTDSETDVEGFFEDEDGKEYIYKEPKLTPLSEISQRLLKLYSDKFGSENVKMIQDSGKVNPKDLDSKFAYIQVTHVTPFFDEKELQERRTEFERCHNIRRFMFEMPFTQTGKRQGGVEEQCKRRTILTAIHCFPYVKKRIPVMYQHHTDLNPIEVAIDEMSKKVAELRQLCSSAEVDMIKLQLKLQGSVSVQVNAGPLAYARAFLDDTNTKRYPDNKVKLLKEVFRQFVEACGQALAVNERLIKEDQLEYQEEMKANYREMAKELSDIMREQMG</sequence>
<feature type="chain" id="PRO_0000190000" description="Dedicator of cytokinesis protein 9">
    <location>
        <begin position="1"/>
        <end position="2055"/>
    </location>
</feature>
<feature type="domain" description="PH" evidence="2">
    <location>
        <begin position="185"/>
        <end position="292"/>
    </location>
</feature>
<feature type="domain" description="C2 DOCK-type" evidence="3">
    <location>
        <begin position="649"/>
        <end position="827"/>
    </location>
</feature>
<feature type="domain" description="DOCKER" evidence="4">
    <location>
        <begin position="1614"/>
        <end position="2055"/>
    </location>
</feature>
<feature type="region of interest" description="Disordered" evidence="5">
    <location>
        <begin position="301"/>
        <end position="326"/>
    </location>
</feature>
<feature type="region of interest" description="Disordered" evidence="5">
    <location>
        <begin position="1253"/>
        <end position="1291"/>
    </location>
</feature>
<feature type="region of interest" description="Interaction with CDC42" evidence="1">
    <location>
        <begin position="1679"/>
        <end position="2055"/>
    </location>
</feature>
<feature type="compositionally biased region" description="Polar residues" evidence="5">
    <location>
        <begin position="1264"/>
        <end position="1276"/>
    </location>
</feature>
<feature type="modified residue" description="Phosphoserine" evidence="14">
    <location>
        <position position="178"/>
    </location>
</feature>
<feature type="modified residue" description="Phosphoserine" evidence="14">
    <location>
        <position position="181"/>
    </location>
</feature>
<feature type="modified residue" description="Phosphoserine" evidence="14">
    <location>
        <position position="444"/>
    </location>
</feature>
<feature type="modified residue" description="Phosphoserine" evidence="14">
    <location>
        <position position="453"/>
    </location>
</feature>
<feature type="modified residue" description="Phosphoserine" evidence="1">
    <location>
        <position position="936"/>
    </location>
</feature>
<feature type="modified residue" description="Phosphoserine" evidence="1">
    <location>
        <position position="1244"/>
    </location>
</feature>
<feature type="modified residue" description="Phosphothreonine" evidence="1">
    <location>
        <position position="1250"/>
    </location>
</feature>
<feature type="modified residue" description="Phosphoserine" evidence="1">
    <location>
        <position position="1264"/>
    </location>
</feature>
<feature type="modified residue" description="Phosphoserine" evidence="14">
    <location>
        <position position="1270"/>
    </location>
</feature>
<feature type="modified residue" description="Phosphoserine" evidence="14">
    <location>
        <position position="1273"/>
    </location>
</feature>
<feature type="splice variant" id="VSP_007711" description="In isoform 3." evidence="10">
    <location>
        <begin position="1"/>
        <end position="1366"/>
    </location>
</feature>
<feature type="splice variant" id="VSP_007712" description="In isoform 2." evidence="9">
    <original>R</original>
    <variation>RNQEGLGPIGHDRKSQTLPVSRNR</variation>
    <location>
        <position position="1364"/>
    </location>
</feature>
<feature type="splice variant" id="VSP_007713" description="In isoform 2." evidence="9">
    <original>K</original>
    <variation>KEADLALQREPPAFPYSHSTCQRKSWG</variation>
    <location>
        <position position="1661"/>
    </location>
</feature>
<feature type="splice variant" id="VSP_007714" description="In isoform 2." evidence="9">
    <location>
        <begin position="1777"/>
        <end position="1790"/>
    </location>
</feature>
<feature type="splice variant" id="VSP_007715" description="In isoform 2." evidence="9">
    <original>MG</original>
    <variation>ICPLEEKTSVLPNSLHIFNAISGTPTSTVVQGLTSSSSVV</variation>
    <location>
        <begin position="2054"/>
        <end position="2055"/>
    </location>
</feature>
<feature type="sequence conflict" description="In Ref. 3; AAH46250." evidence="12" ref="3">
    <original>A</original>
    <variation>T</variation>
    <location>
        <position position="441"/>
    </location>
</feature>
<feature type="sequence conflict" description="In Ref. 3; AAH46250." evidence="12" ref="3">
    <location>
        <position position="1288"/>
    </location>
</feature>
<feature type="sequence conflict" description="In Ref. 1; BAC65713." evidence="12" ref="1">
    <original>P</original>
    <variation>R</variation>
    <location>
        <position position="1602"/>
    </location>
</feature>
<reference key="1">
    <citation type="journal article" date="2003" name="DNA Res.">
        <title>Prediction of the coding sequences of mouse homologues of KIAA gene: II. The complete nucleotide sequences of 400 mouse KIAA-homologous cDNAs identified by screening of terminal sequences of cDNA clones randomly sampled from size-fractionated libraries.</title>
        <authorList>
            <person name="Okazaki N."/>
            <person name="Kikuno R."/>
            <person name="Ohara R."/>
            <person name="Inamoto S."/>
            <person name="Aizawa H."/>
            <person name="Yuasa S."/>
            <person name="Nakajima D."/>
            <person name="Nagase T."/>
            <person name="Ohara O."/>
            <person name="Koga H."/>
        </authorList>
    </citation>
    <scope>NUCLEOTIDE SEQUENCE [LARGE SCALE MRNA] (ISOFORM 1)</scope>
    <source>
        <tissue>Brain</tissue>
    </source>
</reference>
<reference key="2">
    <citation type="journal article" date="2005" name="Science">
        <title>The transcriptional landscape of the mammalian genome.</title>
        <authorList>
            <person name="Carninci P."/>
            <person name="Kasukawa T."/>
            <person name="Katayama S."/>
            <person name="Gough J."/>
            <person name="Frith M.C."/>
            <person name="Maeda N."/>
            <person name="Oyama R."/>
            <person name="Ravasi T."/>
            <person name="Lenhard B."/>
            <person name="Wells C."/>
            <person name="Kodzius R."/>
            <person name="Shimokawa K."/>
            <person name="Bajic V.B."/>
            <person name="Brenner S.E."/>
            <person name="Batalov S."/>
            <person name="Forrest A.R."/>
            <person name="Zavolan M."/>
            <person name="Davis M.J."/>
            <person name="Wilming L.G."/>
            <person name="Aidinis V."/>
            <person name="Allen J.E."/>
            <person name="Ambesi-Impiombato A."/>
            <person name="Apweiler R."/>
            <person name="Aturaliya R.N."/>
            <person name="Bailey T.L."/>
            <person name="Bansal M."/>
            <person name="Baxter L."/>
            <person name="Beisel K.W."/>
            <person name="Bersano T."/>
            <person name="Bono H."/>
            <person name="Chalk A.M."/>
            <person name="Chiu K.P."/>
            <person name="Choudhary V."/>
            <person name="Christoffels A."/>
            <person name="Clutterbuck D.R."/>
            <person name="Crowe M.L."/>
            <person name="Dalla E."/>
            <person name="Dalrymple B.P."/>
            <person name="de Bono B."/>
            <person name="Della Gatta G."/>
            <person name="di Bernardo D."/>
            <person name="Down T."/>
            <person name="Engstrom P."/>
            <person name="Fagiolini M."/>
            <person name="Faulkner G."/>
            <person name="Fletcher C.F."/>
            <person name="Fukushima T."/>
            <person name="Furuno M."/>
            <person name="Futaki S."/>
            <person name="Gariboldi M."/>
            <person name="Georgii-Hemming P."/>
            <person name="Gingeras T.R."/>
            <person name="Gojobori T."/>
            <person name="Green R.E."/>
            <person name="Gustincich S."/>
            <person name="Harbers M."/>
            <person name="Hayashi Y."/>
            <person name="Hensch T.K."/>
            <person name="Hirokawa N."/>
            <person name="Hill D."/>
            <person name="Huminiecki L."/>
            <person name="Iacono M."/>
            <person name="Ikeo K."/>
            <person name="Iwama A."/>
            <person name="Ishikawa T."/>
            <person name="Jakt M."/>
            <person name="Kanapin A."/>
            <person name="Katoh M."/>
            <person name="Kawasawa Y."/>
            <person name="Kelso J."/>
            <person name="Kitamura H."/>
            <person name="Kitano H."/>
            <person name="Kollias G."/>
            <person name="Krishnan S.P."/>
            <person name="Kruger A."/>
            <person name="Kummerfeld S.K."/>
            <person name="Kurochkin I.V."/>
            <person name="Lareau L.F."/>
            <person name="Lazarevic D."/>
            <person name="Lipovich L."/>
            <person name="Liu J."/>
            <person name="Liuni S."/>
            <person name="McWilliam S."/>
            <person name="Madan Babu M."/>
            <person name="Madera M."/>
            <person name="Marchionni L."/>
            <person name="Matsuda H."/>
            <person name="Matsuzawa S."/>
            <person name="Miki H."/>
            <person name="Mignone F."/>
            <person name="Miyake S."/>
            <person name="Morris K."/>
            <person name="Mottagui-Tabar S."/>
            <person name="Mulder N."/>
            <person name="Nakano N."/>
            <person name="Nakauchi H."/>
            <person name="Ng P."/>
            <person name="Nilsson R."/>
            <person name="Nishiguchi S."/>
            <person name="Nishikawa S."/>
            <person name="Nori F."/>
            <person name="Ohara O."/>
            <person name="Okazaki Y."/>
            <person name="Orlando V."/>
            <person name="Pang K.C."/>
            <person name="Pavan W.J."/>
            <person name="Pavesi G."/>
            <person name="Pesole G."/>
            <person name="Petrovsky N."/>
            <person name="Piazza S."/>
            <person name="Reed J."/>
            <person name="Reid J.F."/>
            <person name="Ring B.Z."/>
            <person name="Ringwald M."/>
            <person name="Rost B."/>
            <person name="Ruan Y."/>
            <person name="Salzberg S.L."/>
            <person name="Sandelin A."/>
            <person name="Schneider C."/>
            <person name="Schoenbach C."/>
            <person name="Sekiguchi K."/>
            <person name="Semple C.A."/>
            <person name="Seno S."/>
            <person name="Sessa L."/>
            <person name="Sheng Y."/>
            <person name="Shibata Y."/>
            <person name="Shimada H."/>
            <person name="Shimada K."/>
            <person name="Silva D."/>
            <person name="Sinclair B."/>
            <person name="Sperling S."/>
            <person name="Stupka E."/>
            <person name="Sugiura K."/>
            <person name="Sultana R."/>
            <person name="Takenaka Y."/>
            <person name="Taki K."/>
            <person name="Tammoja K."/>
            <person name="Tan S.L."/>
            <person name="Tang S."/>
            <person name="Taylor M.S."/>
            <person name="Tegner J."/>
            <person name="Teichmann S.A."/>
            <person name="Ueda H.R."/>
            <person name="van Nimwegen E."/>
            <person name="Verardo R."/>
            <person name="Wei C.L."/>
            <person name="Yagi K."/>
            <person name="Yamanishi H."/>
            <person name="Zabarovsky E."/>
            <person name="Zhu S."/>
            <person name="Zimmer A."/>
            <person name="Hide W."/>
            <person name="Bult C."/>
            <person name="Grimmond S.M."/>
            <person name="Teasdale R.D."/>
            <person name="Liu E.T."/>
            <person name="Brusic V."/>
            <person name="Quackenbush J."/>
            <person name="Wahlestedt C."/>
            <person name="Mattick J.S."/>
            <person name="Hume D.A."/>
            <person name="Kai C."/>
            <person name="Sasaki D."/>
            <person name="Tomaru Y."/>
            <person name="Fukuda S."/>
            <person name="Kanamori-Katayama M."/>
            <person name="Suzuki M."/>
            <person name="Aoki J."/>
            <person name="Arakawa T."/>
            <person name="Iida J."/>
            <person name="Imamura K."/>
            <person name="Itoh M."/>
            <person name="Kato T."/>
            <person name="Kawaji H."/>
            <person name="Kawagashira N."/>
            <person name="Kawashima T."/>
            <person name="Kojima M."/>
            <person name="Kondo S."/>
            <person name="Konno H."/>
            <person name="Nakano K."/>
            <person name="Ninomiya N."/>
            <person name="Nishio T."/>
            <person name="Okada M."/>
            <person name="Plessy C."/>
            <person name="Shibata K."/>
            <person name="Shiraki T."/>
            <person name="Suzuki S."/>
            <person name="Tagami M."/>
            <person name="Waki K."/>
            <person name="Watahiki A."/>
            <person name="Okamura-Oho Y."/>
            <person name="Suzuki H."/>
            <person name="Kawai J."/>
            <person name="Hayashizaki Y."/>
        </authorList>
    </citation>
    <scope>NUCLEOTIDE SEQUENCE [LARGE SCALE MRNA] (ISOFORM 3)</scope>
    <source>
        <strain>C57BL/6J</strain>
        <tissue>Brain</tissue>
    </source>
</reference>
<reference key="3">
    <citation type="journal article" date="2004" name="Genome Res.">
        <title>The status, quality, and expansion of the NIH full-length cDNA project: the Mammalian Gene Collection (MGC).</title>
        <authorList>
            <consortium name="The MGC Project Team"/>
        </authorList>
    </citation>
    <scope>NUCLEOTIDE SEQUENCE [LARGE SCALE MRNA] OF 212-2055 (ISOFORM 2)</scope>
    <source>
        <strain>FVB/N</strain>
        <tissue>Mammary tumor</tissue>
    </source>
</reference>
<reference key="4">
    <citation type="journal article" date="2010" name="Cell">
        <title>A tissue-specific atlas of mouse protein phosphorylation and expression.</title>
        <authorList>
            <person name="Huttlin E.L."/>
            <person name="Jedrychowski M.P."/>
            <person name="Elias J.E."/>
            <person name="Goswami T."/>
            <person name="Rad R."/>
            <person name="Beausoleil S.A."/>
            <person name="Villen J."/>
            <person name="Haas W."/>
            <person name="Sowa M.E."/>
            <person name="Gygi S.P."/>
        </authorList>
    </citation>
    <scope>PHOSPHORYLATION [LARGE SCALE ANALYSIS] AT SER-178; SER-181; SER-444; SER-453; SER-1270 AND SER-1273</scope>
    <scope>IDENTIFICATION BY MASS SPECTROMETRY [LARGE SCALE ANALYSIS]</scope>
    <source>
        <tissue>Brain</tissue>
        <tissue>Brown adipose tissue</tissue>
        <tissue>Heart</tissue>
        <tissue>Kidney</tissue>
        <tissue>Lung</tissue>
        <tissue>Pancreas</tissue>
        <tissue>Spleen</tissue>
        <tissue>Testis</tissue>
    </source>
</reference>
<reference key="5">
    <citation type="journal article" date="2012" name="Immun. Ageing">
        <title>Age-related guanine nucleotide exchange factor, mouse Zizimin2, induces filopodia in bone marrow-derived dendritic cells.</title>
        <authorList>
            <person name="Sakabe I."/>
            <person name="Asai A."/>
            <person name="Iijima J."/>
            <person name="Maruyama M."/>
        </authorList>
    </citation>
    <scope>TISSUE SPECIFICITY</scope>
</reference>
<reference key="6">
    <citation type="journal article" date="2015" name="Immun. Ageing">
        <title>The immunosenescence-related gene Zizimin2 is associated with early bone marrow B cell development and marginal zone B cell formation.</title>
        <authorList>
            <person name="Matsuda T."/>
            <person name="Yanase S."/>
            <person name="Takaoka A."/>
            <person name="Maruyama M."/>
        </authorList>
    </citation>
    <scope>TISSUE SPECIFICITY</scope>
</reference>
<reference key="7">
    <citation type="journal article" date="2015" name="Mol. Biol. Cell">
        <title>The RhoGEF DOCK10 is essential for dendritic spine morphogenesis.</title>
        <authorList>
            <person name="Jaudon F."/>
            <person name="Raynaud F."/>
            <person name="Wehrle R."/>
            <person name="Bellanger J.M."/>
            <person name="Doulazmi M."/>
            <person name="Vodjdani G."/>
            <person name="Gasman S."/>
            <person name="Fagni L."/>
            <person name="Dusart I."/>
            <person name="Debant A."/>
            <person name="Schmidt S."/>
        </authorList>
    </citation>
    <scope>FUNCTION</scope>
    <scope>TISSUE SPECIFICITY</scope>
    <scope>DOMAIN</scope>
</reference>
<gene>
    <name evidence="13" type="primary">Dock9</name>
    <name type="synonym">D14Wsu89e</name>
    <name type="synonym">Kiaa1058</name>
    <name evidence="12" type="synonym">Ziz1</name>
</gene>
<proteinExistence type="evidence at protein level"/>
<name>DOCK9_MOUSE</name>
<organism>
    <name type="scientific">Mus musculus</name>
    <name type="common">Mouse</name>
    <dbReference type="NCBI Taxonomy" id="10090"/>
    <lineage>
        <taxon>Eukaryota</taxon>
        <taxon>Metazoa</taxon>
        <taxon>Chordata</taxon>
        <taxon>Craniata</taxon>
        <taxon>Vertebrata</taxon>
        <taxon>Euteleostomi</taxon>
        <taxon>Mammalia</taxon>
        <taxon>Eutheria</taxon>
        <taxon>Euarchontoglires</taxon>
        <taxon>Glires</taxon>
        <taxon>Rodentia</taxon>
        <taxon>Myomorpha</taxon>
        <taxon>Muroidea</taxon>
        <taxon>Muridae</taxon>
        <taxon>Murinae</taxon>
        <taxon>Mus</taxon>
        <taxon>Mus</taxon>
    </lineage>
</organism>